<proteinExistence type="evidence at protein level"/>
<dbReference type="GO" id="GO:0005576">
    <property type="term" value="C:extracellular region"/>
    <property type="evidence" value="ECO:0007669"/>
    <property type="project" value="UniProtKB-SubCell"/>
</dbReference>
<dbReference type="GO" id="GO:0007218">
    <property type="term" value="P:neuropeptide signaling pathway"/>
    <property type="evidence" value="ECO:0007669"/>
    <property type="project" value="UniProtKB-KW"/>
</dbReference>
<keyword id="KW-0027">Amidation</keyword>
<keyword id="KW-0165">Cleavage on pair of basic residues</keyword>
<keyword id="KW-0903">Direct protein sequencing</keyword>
<keyword id="KW-0527">Neuropeptide</keyword>
<keyword id="KW-0873">Pyrrolidone carboxylic acid</keyword>
<keyword id="KW-0964">Secreted</keyword>
<keyword id="KW-0732">Signal</keyword>
<accession>C0HKU2</accession>
<evidence type="ECO:0000255" key="1"/>
<evidence type="ECO:0000269" key="2">
    <source>
    </source>
</evidence>
<evidence type="ECO:0000303" key="3">
    <source>
    </source>
</evidence>
<evidence type="ECO:0000305" key="4"/>
<organism>
    <name type="scientific">Agrotis ipsilon</name>
    <name type="common">Black cutworm moth</name>
    <dbReference type="NCBI Taxonomy" id="56364"/>
    <lineage>
        <taxon>Eukaryota</taxon>
        <taxon>Metazoa</taxon>
        <taxon>Ecdysozoa</taxon>
        <taxon>Arthropoda</taxon>
        <taxon>Hexapoda</taxon>
        <taxon>Insecta</taxon>
        <taxon>Pterygota</taxon>
        <taxon>Neoptera</taxon>
        <taxon>Endopterygota</taxon>
        <taxon>Lepidoptera</taxon>
        <taxon>Glossata</taxon>
        <taxon>Ditrysia</taxon>
        <taxon>Noctuoidea</taxon>
        <taxon>Noctuidae</taxon>
        <taxon>Noctuinae</taxon>
        <taxon>Noctuini</taxon>
        <taxon>Agrotis</taxon>
    </lineage>
</organism>
<protein>
    <recommendedName>
        <fullName evidence="3">Myosuppressin</fullName>
    </recommendedName>
</protein>
<reference evidence="4" key="1">
    <citation type="journal article" date="2018" name="J. Proteome Res.">
        <title>Mating-induced differential peptidomics of neuropeptides and protein hormones in Agrotis ipsilon moths.</title>
        <authorList>
            <person name="Diesner M."/>
            <person name="Gallot A."/>
            <person name="Binz H."/>
            <person name="Gaertner C."/>
            <person name="Vitecek S."/>
            <person name="Kahnt J."/>
            <person name="Schachtner J."/>
            <person name="Jacquin-Joly E."/>
            <person name="Gadenne C."/>
        </authorList>
    </citation>
    <scope>NUCLEOTIDE SEQUENCE [MRNA]</scope>
    <scope>PROTEIN SEQUENCE OF 83-92</scope>
    <scope>TISSUE SPECIFICITY</scope>
    <scope>MASS SPECTROMETRY</scope>
    <scope>IDENTIFICATION BY MASS SPECTROMETRY</scope>
    <scope>AMIDATION AT PHE-92</scope>
    <scope>PYROGLUTAMATE FORMATION AT GLN-83</scope>
</reference>
<comment type="function">
    <text evidence="4">Myoinhibiting neuropeptide.</text>
</comment>
<comment type="subcellular location">
    <subcellularLocation>
        <location evidence="4">Secreted</location>
    </subcellularLocation>
</comment>
<comment type="tissue specificity">
    <text evidence="2">Expressed in corpora cardiaca (CC), corpora allata (CA), antennal lobe (AL) and gnathal ganglion (GNG) (at protein level). In its non-pyroglutamate form, expression in GNG detected in all animals, in AL, CC and in CA in most animals (at protein level). In its pyroglutamate form, expression in CC, CA and GNG detected in all animals, in AL in some animals (at protein level).</text>
</comment>
<comment type="mass spectrometry" mass="1246.66" method="MALDI" evidence="2">
    <text>Non-pyroglutamate form.</text>
</comment>
<comment type="mass spectrometry" mass="1229.65" method="MALDI" evidence="2">
    <text>Pyroglutamate form.</text>
</comment>
<comment type="similarity">
    <text evidence="4">Belongs to the myosuppressin family.</text>
</comment>
<feature type="signal peptide" evidence="1">
    <location>
        <begin position="1"/>
        <end position="24"/>
    </location>
</feature>
<feature type="propeptide" id="PRO_0000444239" evidence="4">
    <location>
        <begin position="25"/>
        <end position="80"/>
    </location>
</feature>
<feature type="peptide" id="PRO_0000444240" description="Myosuppressin" evidence="2">
    <location>
        <begin position="83"/>
        <end position="92"/>
    </location>
</feature>
<feature type="propeptide" id="PRO_0000444241" evidence="4">
    <location>
        <position position="96"/>
    </location>
</feature>
<feature type="modified residue" description="Pyrrolidone carboxylic acid; partial" evidence="2">
    <location>
        <position position="83"/>
    </location>
</feature>
<feature type="modified residue" description="Phenylalanine amide" evidence="2">
    <location>
        <position position="92"/>
    </location>
</feature>
<name>NEMS_AGRIP</name>
<sequence length="96" mass="10503">MALGNGYYCAVVCVVLACASVVLCAPAQLCAGAADDDPRAARFCQALNTFLELYAEAAGEQVPEYQALVRDYPQLLDTGMKRQDVVHSFLRFGRRR</sequence>